<organism>
    <name type="scientific">Bacillus cytotoxicus (strain DSM 22905 / CIP 110041 / 391-98 / NVH 391-98)</name>
    <dbReference type="NCBI Taxonomy" id="315749"/>
    <lineage>
        <taxon>Bacteria</taxon>
        <taxon>Bacillati</taxon>
        <taxon>Bacillota</taxon>
        <taxon>Bacilli</taxon>
        <taxon>Bacillales</taxon>
        <taxon>Bacillaceae</taxon>
        <taxon>Bacillus</taxon>
        <taxon>Bacillus cereus group</taxon>
    </lineage>
</organism>
<sequence length="172" mass="19198">MAINFEELHPQEQAELERNIFFTTLEQIKGWARSNSLWPMTFGLACCAIEMMGVGSSHYDLDRFGSFFRTSPRQSDVMIVSGTVTKKMAPIVRRLYDQMPEPKWVIAMGSCATAGGPYVNSYAVVKGVDQIVPVDVYIPGCPPNPAALIYGINKLKEKIRYEAKTGKQVTNK</sequence>
<feature type="chain" id="PRO_0000376136" description="NADH-quinone oxidoreductase subunit B">
    <location>
        <begin position="1"/>
        <end position="172"/>
    </location>
</feature>
<feature type="binding site" evidence="1">
    <location>
        <position position="46"/>
    </location>
    <ligand>
        <name>[4Fe-4S] cluster</name>
        <dbReference type="ChEBI" id="CHEBI:49883"/>
    </ligand>
</feature>
<feature type="binding site" evidence="1">
    <location>
        <position position="47"/>
    </location>
    <ligand>
        <name>[4Fe-4S] cluster</name>
        <dbReference type="ChEBI" id="CHEBI:49883"/>
    </ligand>
</feature>
<feature type="binding site" evidence="1">
    <location>
        <position position="111"/>
    </location>
    <ligand>
        <name>[4Fe-4S] cluster</name>
        <dbReference type="ChEBI" id="CHEBI:49883"/>
    </ligand>
</feature>
<feature type="binding site" evidence="1">
    <location>
        <position position="141"/>
    </location>
    <ligand>
        <name>[4Fe-4S] cluster</name>
        <dbReference type="ChEBI" id="CHEBI:49883"/>
    </ligand>
</feature>
<keyword id="KW-0004">4Fe-4S</keyword>
<keyword id="KW-1003">Cell membrane</keyword>
<keyword id="KW-0408">Iron</keyword>
<keyword id="KW-0411">Iron-sulfur</keyword>
<keyword id="KW-0472">Membrane</keyword>
<keyword id="KW-0479">Metal-binding</keyword>
<keyword id="KW-0520">NAD</keyword>
<keyword id="KW-0874">Quinone</keyword>
<keyword id="KW-1278">Translocase</keyword>
<keyword id="KW-0813">Transport</keyword>
<gene>
    <name evidence="1" type="primary">nuoB</name>
    <name type="ordered locus">Bcer98_3818</name>
</gene>
<proteinExistence type="inferred from homology"/>
<reference key="1">
    <citation type="journal article" date="2008" name="Chem. Biol. Interact.">
        <title>Extending the Bacillus cereus group genomics to putative food-borne pathogens of different toxicity.</title>
        <authorList>
            <person name="Lapidus A."/>
            <person name="Goltsman E."/>
            <person name="Auger S."/>
            <person name="Galleron N."/>
            <person name="Segurens B."/>
            <person name="Dossat C."/>
            <person name="Land M.L."/>
            <person name="Broussolle V."/>
            <person name="Brillard J."/>
            <person name="Guinebretiere M.-H."/>
            <person name="Sanchis V."/>
            <person name="Nguen-the C."/>
            <person name="Lereclus D."/>
            <person name="Richardson P."/>
            <person name="Wincker P."/>
            <person name="Weissenbach J."/>
            <person name="Ehrlich S.D."/>
            <person name="Sorokin A."/>
        </authorList>
    </citation>
    <scope>NUCLEOTIDE SEQUENCE [LARGE SCALE GENOMIC DNA]</scope>
    <source>
        <strain>DSM 22905 / CIP 110041 / 391-98 / NVH 391-98</strain>
    </source>
</reference>
<name>NUOB_BACCN</name>
<protein>
    <recommendedName>
        <fullName evidence="1">NADH-quinone oxidoreductase subunit B</fullName>
        <ecNumber evidence="1">7.1.1.-</ecNumber>
    </recommendedName>
    <alternativeName>
        <fullName evidence="1">NADH dehydrogenase I subunit B</fullName>
    </alternativeName>
    <alternativeName>
        <fullName evidence="1">NDH-1 subunit B</fullName>
    </alternativeName>
</protein>
<evidence type="ECO:0000255" key="1">
    <source>
        <dbReference type="HAMAP-Rule" id="MF_01356"/>
    </source>
</evidence>
<comment type="function">
    <text evidence="1">NDH-1 shuttles electrons from NADH, via FMN and iron-sulfur (Fe-S) centers, to quinones in the respiratory chain. The immediate electron acceptor for the enzyme in this species is believed to be a menaquinone. Couples the redox reaction to proton translocation (for every two electrons transferred, four hydrogen ions are translocated across the cytoplasmic membrane), and thus conserves the redox energy in a proton gradient.</text>
</comment>
<comment type="catalytic activity">
    <reaction evidence="1">
        <text>a quinone + NADH + 5 H(+)(in) = a quinol + NAD(+) + 4 H(+)(out)</text>
        <dbReference type="Rhea" id="RHEA:57888"/>
        <dbReference type="ChEBI" id="CHEBI:15378"/>
        <dbReference type="ChEBI" id="CHEBI:24646"/>
        <dbReference type="ChEBI" id="CHEBI:57540"/>
        <dbReference type="ChEBI" id="CHEBI:57945"/>
        <dbReference type="ChEBI" id="CHEBI:132124"/>
    </reaction>
</comment>
<comment type="cofactor">
    <cofactor evidence="1">
        <name>[4Fe-4S] cluster</name>
        <dbReference type="ChEBI" id="CHEBI:49883"/>
    </cofactor>
    <text evidence="1">Binds 1 [4Fe-4S] cluster.</text>
</comment>
<comment type="subunit">
    <text evidence="1">NDH-1 is composed of 14 different subunits. Subunits NuoB, C, D, E, F, and G constitute the peripheral sector of the complex.</text>
</comment>
<comment type="subcellular location">
    <subcellularLocation>
        <location evidence="1">Cell membrane</location>
        <topology evidence="1">Peripheral membrane protein</topology>
        <orientation evidence="1">Cytoplasmic side</orientation>
    </subcellularLocation>
</comment>
<comment type="similarity">
    <text evidence="1">Belongs to the complex I 20 kDa subunit family.</text>
</comment>
<dbReference type="EC" id="7.1.1.-" evidence="1"/>
<dbReference type="EMBL" id="CP000764">
    <property type="protein sequence ID" value="ABS24008.1"/>
    <property type="molecule type" value="Genomic_DNA"/>
</dbReference>
<dbReference type="RefSeq" id="WP_012096266.1">
    <property type="nucleotide sequence ID" value="NC_009674.1"/>
</dbReference>
<dbReference type="SMR" id="A7GV50"/>
<dbReference type="STRING" id="315749.Bcer98_3818"/>
<dbReference type="GeneID" id="33899059"/>
<dbReference type="KEGG" id="bcy:Bcer98_3818"/>
<dbReference type="eggNOG" id="COG0377">
    <property type="taxonomic scope" value="Bacteria"/>
</dbReference>
<dbReference type="HOGENOM" id="CLU_055737_7_3_9"/>
<dbReference type="OrthoDB" id="9786737at2"/>
<dbReference type="Proteomes" id="UP000002300">
    <property type="component" value="Chromosome"/>
</dbReference>
<dbReference type="GO" id="GO:0005886">
    <property type="term" value="C:plasma membrane"/>
    <property type="evidence" value="ECO:0007669"/>
    <property type="project" value="UniProtKB-SubCell"/>
</dbReference>
<dbReference type="GO" id="GO:0045271">
    <property type="term" value="C:respiratory chain complex I"/>
    <property type="evidence" value="ECO:0007669"/>
    <property type="project" value="TreeGrafter"/>
</dbReference>
<dbReference type="GO" id="GO:0051539">
    <property type="term" value="F:4 iron, 4 sulfur cluster binding"/>
    <property type="evidence" value="ECO:0007669"/>
    <property type="project" value="UniProtKB-KW"/>
</dbReference>
<dbReference type="GO" id="GO:0005506">
    <property type="term" value="F:iron ion binding"/>
    <property type="evidence" value="ECO:0007669"/>
    <property type="project" value="UniProtKB-UniRule"/>
</dbReference>
<dbReference type="GO" id="GO:0008137">
    <property type="term" value="F:NADH dehydrogenase (ubiquinone) activity"/>
    <property type="evidence" value="ECO:0007669"/>
    <property type="project" value="InterPro"/>
</dbReference>
<dbReference type="GO" id="GO:0050136">
    <property type="term" value="F:NADH:ubiquinone reductase (non-electrogenic) activity"/>
    <property type="evidence" value="ECO:0007669"/>
    <property type="project" value="UniProtKB-UniRule"/>
</dbReference>
<dbReference type="GO" id="GO:0048038">
    <property type="term" value="F:quinone binding"/>
    <property type="evidence" value="ECO:0007669"/>
    <property type="project" value="UniProtKB-KW"/>
</dbReference>
<dbReference type="GO" id="GO:0009060">
    <property type="term" value="P:aerobic respiration"/>
    <property type="evidence" value="ECO:0007669"/>
    <property type="project" value="TreeGrafter"/>
</dbReference>
<dbReference type="GO" id="GO:0015990">
    <property type="term" value="P:electron transport coupled proton transport"/>
    <property type="evidence" value="ECO:0007669"/>
    <property type="project" value="TreeGrafter"/>
</dbReference>
<dbReference type="FunFam" id="3.40.50.12280:FF:000002">
    <property type="entry name" value="NADH-quinone oxidoreductase subunit B"/>
    <property type="match status" value="1"/>
</dbReference>
<dbReference type="Gene3D" id="3.40.50.12280">
    <property type="match status" value="1"/>
</dbReference>
<dbReference type="HAMAP" id="MF_01356">
    <property type="entry name" value="NDH1_NuoB"/>
    <property type="match status" value="1"/>
</dbReference>
<dbReference type="InterPro" id="IPR006137">
    <property type="entry name" value="NADH_UbQ_OxRdtase-like_20kDa"/>
</dbReference>
<dbReference type="InterPro" id="IPR006138">
    <property type="entry name" value="NADH_UQ_OxRdtase_20Kd_su"/>
</dbReference>
<dbReference type="NCBIfam" id="TIGR01957">
    <property type="entry name" value="nuoB_fam"/>
    <property type="match status" value="1"/>
</dbReference>
<dbReference type="NCBIfam" id="NF005012">
    <property type="entry name" value="PRK06411.1"/>
    <property type="match status" value="1"/>
</dbReference>
<dbReference type="PANTHER" id="PTHR11995">
    <property type="entry name" value="NADH DEHYDROGENASE"/>
    <property type="match status" value="1"/>
</dbReference>
<dbReference type="PANTHER" id="PTHR11995:SF14">
    <property type="entry name" value="NADH DEHYDROGENASE [UBIQUINONE] IRON-SULFUR PROTEIN 7, MITOCHONDRIAL"/>
    <property type="match status" value="1"/>
</dbReference>
<dbReference type="Pfam" id="PF01058">
    <property type="entry name" value="Oxidored_q6"/>
    <property type="match status" value="1"/>
</dbReference>
<dbReference type="SUPFAM" id="SSF56770">
    <property type="entry name" value="HydA/Nqo6-like"/>
    <property type="match status" value="1"/>
</dbReference>
<accession>A7GV50</accession>